<dbReference type="EC" id="1.3.7.7" evidence="1"/>
<dbReference type="EMBL" id="AP005672">
    <property type="protein sequence ID" value="BAC85097.1"/>
    <property type="molecule type" value="Genomic_DNA"/>
</dbReference>
<dbReference type="RefSeq" id="NP_904247.1">
    <property type="nucleotide sequence ID" value="NC_005087.2"/>
</dbReference>
<dbReference type="RefSeq" id="YP_009477577.1">
    <property type="nucleotide sequence ID" value="NC_037465.1"/>
</dbReference>
<dbReference type="SMR" id="Q6YXP4"/>
<dbReference type="STRING" id="3218.Q6YXP4"/>
<dbReference type="GeneID" id="2546808"/>
<dbReference type="GeneID" id="36487222"/>
<dbReference type="KEGG" id="ppp:2546808"/>
<dbReference type="InParanoid" id="Q6YXP4"/>
<dbReference type="OrthoDB" id="64at2759"/>
<dbReference type="UniPathway" id="UPA00670"/>
<dbReference type="Proteomes" id="UP000006727">
    <property type="component" value="Chloroplast"/>
</dbReference>
<dbReference type="GO" id="GO:0009507">
    <property type="term" value="C:chloroplast"/>
    <property type="evidence" value="ECO:0007669"/>
    <property type="project" value="UniProtKB-SubCell"/>
</dbReference>
<dbReference type="GO" id="GO:0051539">
    <property type="term" value="F:4 iron, 4 sulfur cluster binding"/>
    <property type="evidence" value="ECO:0007669"/>
    <property type="project" value="UniProtKB-UniRule"/>
</dbReference>
<dbReference type="GO" id="GO:0005524">
    <property type="term" value="F:ATP binding"/>
    <property type="evidence" value="ECO:0007669"/>
    <property type="project" value="UniProtKB-UniRule"/>
</dbReference>
<dbReference type="GO" id="GO:0046872">
    <property type="term" value="F:metal ion binding"/>
    <property type="evidence" value="ECO:0007669"/>
    <property type="project" value="UniProtKB-KW"/>
</dbReference>
<dbReference type="GO" id="GO:0016730">
    <property type="term" value="F:oxidoreductase activity, acting on iron-sulfur proteins as donors"/>
    <property type="evidence" value="ECO:0007669"/>
    <property type="project" value="InterPro"/>
</dbReference>
<dbReference type="GO" id="GO:0016636">
    <property type="term" value="F:oxidoreductase activity, acting on the CH-CH group of donors, iron-sulfur protein as acceptor"/>
    <property type="evidence" value="ECO:0007669"/>
    <property type="project" value="UniProtKB-UniRule"/>
</dbReference>
<dbReference type="GO" id="GO:0036068">
    <property type="term" value="P:light-independent chlorophyll biosynthetic process"/>
    <property type="evidence" value="ECO:0007669"/>
    <property type="project" value="UniProtKB-UniRule"/>
</dbReference>
<dbReference type="GO" id="GO:0019685">
    <property type="term" value="P:photosynthesis, dark reaction"/>
    <property type="evidence" value="ECO:0007669"/>
    <property type="project" value="InterPro"/>
</dbReference>
<dbReference type="CDD" id="cd01979">
    <property type="entry name" value="Pchlide_reductase_N"/>
    <property type="match status" value="1"/>
</dbReference>
<dbReference type="Gene3D" id="3.40.50.1980">
    <property type="entry name" value="Nitrogenase molybdenum iron protein domain"/>
    <property type="match status" value="3"/>
</dbReference>
<dbReference type="HAMAP" id="MF_00352">
    <property type="entry name" value="ChlN_BchN"/>
    <property type="match status" value="1"/>
</dbReference>
<dbReference type="InterPro" id="IPR050293">
    <property type="entry name" value="LIPOR_BchN/ChlN"/>
</dbReference>
<dbReference type="InterPro" id="IPR000510">
    <property type="entry name" value="Nase/OxRdtase_comp1"/>
</dbReference>
<dbReference type="InterPro" id="IPR005970">
    <property type="entry name" value="Protochl_reductN"/>
</dbReference>
<dbReference type="NCBIfam" id="TIGR01279">
    <property type="entry name" value="DPOR_bchN"/>
    <property type="match status" value="1"/>
</dbReference>
<dbReference type="NCBIfam" id="NF002768">
    <property type="entry name" value="PRK02842.1"/>
    <property type="match status" value="1"/>
</dbReference>
<dbReference type="PANTHER" id="PTHR39429">
    <property type="entry name" value="LIGHT-INDEPENDENT PROTOCHLOROPHYLLIDE REDUCTASE SUBUNIT N"/>
    <property type="match status" value="1"/>
</dbReference>
<dbReference type="PANTHER" id="PTHR39429:SF3">
    <property type="entry name" value="LIGHT-INDEPENDENT PROTOCHLOROPHYLLIDE REDUCTASE SUBUNIT N"/>
    <property type="match status" value="1"/>
</dbReference>
<dbReference type="Pfam" id="PF00148">
    <property type="entry name" value="Oxidored_nitro"/>
    <property type="match status" value="1"/>
</dbReference>
<dbReference type="PIRSF" id="PIRSF000162">
    <property type="entry name" value="P_chlorophyll_rd"/>
    <property type="match status" value="1"/>
</dbReference>
<dbReference type="SUPFAM" id="SSF53807">
    <property type="entry name" value="Helical backbone' metal receptor"/>
    <property type="match status" value="1"/>
</dbReference>
<accession>Q6YXP4</accession>
<comment type="function">
    <text evidence="1">Component of the dark-operative protochlorophyllide reductase (DPOR) that uses Mg-ATP and reduced ferredoxin to reduce ring D of protochlorophyllide (Pchlide) to form chlorophyllide a (Chlide). This reaction is light-independent. The NB-protein (ChlN-ChlB) is the catalytic component of the complex.</text>
</comment>
<comment type="catalytic activity">
    <reaction evidence="1">
        <text>chlorophyllide a + oxidized 2[4Fe-4S]-[ferredoxin] + 2 ADP + 2 phosphate = protochlorophyllide a + reduced 2[4Fe-4S]-[ferredoxin] + 2 ATP + 2 H2O</text>
        <dbReference type="Rhea" id="RHEA:28202"/>
        <dbReference type="Rhea" id="RHEA-COMP:10002"/>
        <dbReference type="Rhea" id="RHEA-COMP:10004"/>
        <dbReference type="ChEBI" id="CHEBI:15377"/>
        <dbReference type="ChEBI" id="CHEBI:30616"/>
        <dbReference type="ChEBI" id="CHEBI:33722"/>
        <dbReference type="ChEBI" id="CHEBI:33723"/>
        <dbReference type="ChEBI" id="CHEBI:43474"/>
        <dbReference type="ChEBI" id="CHEBI:83348"/>
        <dbReference type="ChEBI" id="CHEBI:83350"/>
        <dbReference type="ChEBI" id="CHEBI:456216"/>
        <dbReference type="EC" id="1.3.7.7"/>
    </reaction>
</comment>
<comment type="cofactor">
    <cofactor evidence="1">
        <name>[4Fe-4S] cluster</name>
        <dbReference type="ChEBI" id="CHEBI:49883"/>
    </cofactor>
    <text evidence="1">Binds 1 [4Fe-4S] cluster per heterodimer. The cluster is bound at the heterodimer interface by residues from both subunits.</text>
</comment>
<comment type="pathway">
    <text evidence="1">Porphyrin-containing compound metabolism; chlorophyll biosynthesis (light-independent).</text>
</comment>
<comment type="subunit">
    <text evidence="1">Protochlorophyllide reductase is composed of three subunits; ChlL, ChlN and ChlB. Forms a heterotetramer of two ChlB and two ChlN subunits.</text>
</comment>
<comment type="subcellular location">
    <subcellularLocation>
        <location>Plastid</location>
        <location>Chloroplast</location>
    </subcellularLocation>
</comment>
<comment type="similarity">
    <text evidence="1">Belongs to the BchN/ChlN family.</text>
</comment>
<name>CHLN_PHYPA</name>
<gene>
    <name evidence="1" type="primary">chlN</name>
</gene>
<evidence type="ECO:0000255" key="1">
    <source>
        <dbReference type="HAMAP-Rule" id="MF_00352"/>
    </source>
</evidence>
<geneLocation type="chloroplast"/>
<proteinExistence type="inferred from homology"/>
<feature type="chain" id="PRO_0000208617" description="Light-independent protochlorophyllide reductase subunit N">
    <location>
        <begin position="1"/>
        <end position="474"/>
    </location>
</feature>
<feature type="binding site" evidence="1">
    <location>
        <position position="22"/>
    </location>
    <ligand>
        <name>[4Fe-4S] cluster</name>
        <dbReference type="ChEBI" id="CHEBI:49883"/>
        <note>ligand shared with heterodimeric partner</note>
    </ligand>
</feature>
<feature type="binding site" evidence="1">
    <location>
        <position position="47"/>
    </location>
    <ligand>
        <name>[4Fe-4S] cluster</name>
        <dbReference type="ChEBI" id="CHEBI:49883"/>
        <note>ligand shared with heterodimeric partner</note>
    </ligand>
</feature>
<feature type="binding site" evidence="1">
    <location>
        <position position="107"/>
    </location>
    <ligand>
        <name>[4Fe-4S] cluster</name>
        <dbReference type="ChEBI" id="CHEBI:49883"/>
        <note>ligand shared with heterodimeric partner</note>
    </ligand>
</feature>
<protein>
    <recommendedName>
        <fullName evidence="1">Light-independent protochlorophyllide reductase subunit N</fullName>
        <shortName evidence="1">DPOR subunit N</shortName>
        <shortName evidence="1">LI-POR subunit N</shortName>
        <ecNumber evidence="1">1.3.7.7</ecNumber>
    </recommendedName>
</protein>
<reference key="1">
    <citation type="journal article" date="2003" name="Nucleic Acids Res.">
        <title>Complete chloroplast DNA sequence of the moss Physcomitrella patens: evidence for the loss and relocation of rpoA from the chloroplast to the nucleus.</title>
        <authorList>
            <person name="Sugiura C."/>
            <person name="Kobayashi Y."/>
            <person name="Setsuyuki A."/>
            <person name="Sugita C."/>
            <person name="Sugita M."/>
        </authorList>
    </citation>
    <scope>NUCLEOTIDE SEQUENCE [LARGE SCALE GENOMIC DNA]</scope>
    <source>
        <strain>cv. Gransden 2004</strain>
    </source>
</reference>
<keyword id="KW-0004">4Fe-4S</keyword>
<keyword id="KW-0067">ATP-binding</keyword>
<keyword id="KW-0149">Chlorophyll biosynthesis</keyword>
<keyword id="KW-0150">Chloroplast</keyword>
<keyword id="KW-0408">Iron</keyword>
<keyword id="KW-0411">Iron-sulfur</keyword>
<keyword id="KW-0479">Metal-binding</keyword>
<keyword id="KW-0547">Nucleotide-binding</keyword>
<keyword id="KW-0560">Oxidoreductase</keyword>
<keyword id="KW-0602">Photosynthesis</keyword>
<keyword id="KW-0934">Plastid</keyword>
<keyword id="KW-1185">Reference proteome</keyword>
<organism>
    <name type="scientific">Physcomitrium patens</name>
    <name type="common">Spreading-leaved earth moss</name>
    <name type="synonym">Physcomitrella patens</name>
    <dbReference type="NCBI Taxonomy" id="3218"/>
    <lineage>
        <taxon>Eukaryota</taxon>
        <taxon>Viridiplantae</taxon>
        <taxon>Streptophyta</taxon>
        <taxon>Embryophyta</taxon>
        <taxon>Bryophyta</taxon>
        <taxon>Bryophytina</taxon>
        <taxon>Bryopsida</taxon>
        <taxon>Funariidae</taxon>
        <taxon>Funariales</taxon>
        <taxon>Funariaceae</taxon>
        <taxon>Physcomitrium</taxon>
    </lineage>
</organism>
<sequence length="474" mass="54052">MSNKISETLTFECETGNYHTFCPISCVAWLYQKIEDSFFLVVGTKTCGYFLQNALGVMIFAEPRYAMAELEEGDISAQLNDYKELKRLCLQIKKDRNPSVIIWIGTCTTEIIKMDLEGMAPKLENELGIPIVVARANGLDYAFTQGEDTVLAAMAHRCPEQNTLLDNKKVIQQDSTIQDFFSFLSLEKKEETRNNSSIKSKKHPPLVLFGSLPSTVASQLSSELKRQSVQVSGWLPAQRYTDLPSLGDQVYVCGVNPFLSRTATTLMRRRKCKLIGAPFPIGPDGTRAWIEKICSVFNIKTKDLEQREQQIWENLKDYLDLVRGKSVFFMGDNLLEISLARFLIRCGMIVYEIGIPYLDKRYQAAELLFLQNTCKSMGIPMPRIVEKPDNYNQIQRMRELQPDLAITGMAHANPLEARGINTKWSVEFTFAQIHGFTNARDVLELVTRPLRRNNNLENLGWNDLTKKEKQIKFN</sequence>